<protein>
    <recommendedName>
        <fullName>Zinc transporter ZTP29</fullName>
    </recommendedName>
    <alternativeName>
        <fullName>Zinc transporter 29</fullName>
    </alternativeName>
</protein>
<sequence>MDSQMLVALGLSLVGGLSTSLGALFVVLSETPNMKMLGLLQGFASGLMLSISFLDLAHNAINSIGFFKANLWFFGGVIFFACITKFIPEPTLGPSTDGKRRKKNGDEGGKDMMKKHRKQVLYSGLITAIGISLHNFPEGMAVFLGSIKGMRVGVNLALAIALHNIPEGVAVALPIYFATESKWQAFKLATLSGLAEPLGVIIVAYLFPRSLSPEILEGLLGAVGGIMAFLTLHEMLPLAFDYAGQKQAVKAVFFGMACMSASLYFLELSLPETMSL</sequence>
<accession>Q940Q3</accession>
<accession>Q9LT34</accession>
<feature type="chain" id="PRO_0000400017" description="Zinc transporter ZTP29">
    <location>
        <begin position="1"/>
        <end position="276"/>
    </location>
</feature>
<feature type="topological domain" description="Cytoplasmic" evidence="1">
    <location>
        <begin position="1"/>
        <end position="6"/>
    </location>
</feature>
<feature type="transmembrane region" description="Helical" evidence="1">
    <location>
        <begin position="7"/>
        <end position="27"/>
    </location>
</feature>
<feature type="topological domain" description="Lumenal" evidence="1">
    <location>
        <begin position="28"/>
        <end position="35"/>
    </location>
</feature>
<feature type="transmembrane region" description="Helical" evidence="1">
    <location>
        <begin position="36"/>
        <end position="56"/>
    </location>
</feature>
<feature type="topological domain" description="Cytoplasmic" evidence="1">
    <location>
        <begin position="57"/>
        <end position="63"/>
    </location>
</feature>
<feature type="transmembrane region" description="Helical" evidence="1">
    <location>
        <begin position="64"/>
        <end position="84"/>
    </location>
</feature>
<feature type="topological domain" description="Lumenal" evidence="1">
    <location>
        <begin position="85"/>
        <end position="123"/>
    </location>
</feature>
<feature type="transmembrane region" description="Helical" evidence="1">
    <location>
        <begin position="124"/>
        <end position="144"/>
    </location>
</feature>
<feature type="topological domain" description="Cytoplasmic" evidence="1">
    <location>
        <begin position="145"/>
        <end position="156"/>
    </location>
</feature>
<feature type="transmembrane region" description="Helical" evidence="1">
    <location>
        <begin position="157"/>
        <end position="177"/>
    </location>
</feature>
<feature type="topological domain" description="Lumenal" evidence="1">
    <location>
        <begin position="178"/>
        <end position="187"/>
    </location>
</feature>
<feature type="transmembrane region" description="Helical" evidence="1">
    <location>
        <begin position="188"/>
        <end position="208"/>
    </location>
</feature>
<feature type="topological domain" description="Cytoplasmic" evidence="1">
    <location>
        <begin position="209"/>
        <end position="219"/>
    </location>
</feature>
<feature type="transmembrane region" description="Helical" evidence="1">
    <location>
        <begin position="220"/>
        <end position="240"/>
    </location>
</feature>
<feature type="topological domain" description="Lumenal" evidence="1">
    <location>
        <begin position="241"/>
        <end position="250"/>
    </location>
</feature>
<feature type="transmembrane region" description="Helical" evidence="1">
    <location>
        <begin position="251"/>
        <end position="271"/>
    </location>
</feature>
<feature type="topological domain" description="Cytoplasmic" evidence="1">
    <location>
        <begin position="272"/>
        <end position="276"/>
    </location>
</feature>
<keyword id="KW-0256">Endoplasmic reticulum</keyword>
<keyword id="KW-0406">Ion transport</keyword>
<keyword id="KW-0472">Membrane</keyword>
<keyword id="KW-1185">Reference proteome</keyword>
<keyword id="KW-0346">Stress response</keyword>
<keyword id="KW-0812">Transmembrane</keyword>
<keyword id="KW-1133">Transmembrane helix</keyword>
<keyword id="KW-0813">Transport</keyword>
<keyword id="KW-0862">Zinc</keyword>
<keyword id="KW-0864">Zinc transport</keyword>
<comment type="function">
    <text evidence="2">Zinc transporter involved response to salt stress. May act through the regulation of zinc levels required to induce the unfolded protein response (UPR) pathway.</text>
</comment>
<comment type="subcellular location">
    <subcellularLocation>
        <location evidence="2">Endoplasmic reticulum membrane</location>
        <topology evidence="2">Multi-pass membrane protein</topology>
    </subcellularLocation>
</comment>
<comment type="tissue specificity">
    <text evidence="2">Expressed in hypocotyls, cotyledons, leaves and anthers.</text>
</comment>
<comment type="induction">
    <text evidence="2">By treatment with high concentrations of salt.</text>
</comment>
<comment type="disruption phenotype">
    <text evidence="2">No visible phenotype under normal growth condition, but hypersensitivity to elevated levels of salt.</text>
</comment>
<comment type="similarity">
    <text evidence="3">Belongs to the ZIP transporter (TC 2.A.5) family. ZupT subfamily.</text>
</comment>
<comment type="sequence caution" evidence="3">
    <conflict type="erroneous gene model prediction">
        <sequence resource="EMBL-CDS" id="BAB02495"/>
    </conflict>
</comment>
<name>ZTP29_ARATH</name>
<evidence type="ECO:0000255" key="1"/>
<evidence type="ECO:0000269" key="2">
    <source>
    </source>
</evidence>
<evidence type="ECO:0000305" key="3"/>
<reference key="1">
    <citation type="journal article" date="2000" name="DNA Res.">
        <title>Structural analysis of Arabidopsis thaliana chromosome 3. I. Sequence features of the regions of 4,504,864 bp covered by sixty P1 and TAC clones.</title>
        <authorList>
            <person name="Sato S."/>
            <person name="Nakamura Y."/>
            <person name="Kaneko T."/>
            <person name="Katoh T."/>
            <person name="Asamizu E."/>
            <person name="Tabata S."/>
        </authorList>
    </citation>
    <scope>NUCLEOTIDE SEQUENCE [LARGE SCALE GENOMIC DNA]</scope>
    <source>
        <strain>cv. Columbia</strain>
    </source>
</reference>
<reference key="2">
    <citation type="journal article" date="2017" name="Plant J.">
        <title>Araport11: a complete reannotation of the Arabidopsis thaliana reference genome.</title>
        <authorList>
            <person name="Cheng C.Y."/>
            <person name="Krishnakumar V."/>
            <person name="Chan A.P."/>
            <person name="Thibaud-Nissen F."/>
            <person name="Schobel S."/>
            <person name="Town C.D."/>
        </authorList>
    </citation>
    <scope>GENOME REANNOTATION</scope>
    <source>
        <strain>cv. Columbia</strain>
    </source>
</reference>
<reference key="3">
    <citation type="journal article" date="2003" name="Science">
        <title>Empirical analysis of transcriptional activity in the Arabidopsis genome.</title>
        <authorList>
            <person name="Yamada K."/>
            <person name="Lim J."/>
            <person name="Dale J.M."/>
            <person name="Chen H."/>
            <person name="Shinn P."/>
            <person name="Palm C.J."/>
            <person name="Southwick A.M."/>
            <person name="Wu H.C."/>
            <person name="Kim C.J."/>
            <person name="Nguyen M."/>
            <person name="Pham P.K."/>
            <person name="Cheuk R.F."/>
            <person name="Karlin-Newmann G."/>
            <person name="Liu S.X."/>
            <person name="Lam B."/>
            <person name="Sakano H."/>
            <person name="Wu T."/>
            <person name="Yu G."/>
            <person name="Miranda M."/>
            <person name="Quach H.L."/>
            <person name="Tripp M."/>
            <person name="Chang C.H."/>
            <person name="Lee J.M."/>
            <person name="Toriumi M.J."/>
            <person name="Chan M.M."/>
            <person name="Tang C.C."/>
            <person name="Onodera C.S."/>
            <person name="Deng J.M."/>
            <person name="Akiyama K."/>
            <person name="Ansari Y."/>
            <person name="Arakawa T."/>
            <person name="Banh J."/>
            <person name="Banno F."/>
            <person name="Bowser L."/>
            <person name="Brooks S.Y."/>
            <person name="Carninci P."/>
            <person name="Chao Q."/>
            <person name="Choy N."/>
            <person name="Enju A."/>
            <person name="Goldsmith A.D."/>
            <person name="Gurjal M."/>
            <person name="Hansen N.F."/>
            <person name="Hayashizaki Y."/>
            <person name="Johnson-Hopson C."/>
            <person name="Hsuan V.W."/>
            <person name="Iida K."/>
            <person name="Karnes M."/>
            <person name="Khan S."/>
            <person name="Koesema E."/>
            <person name="Ishida J."/>
            <person name="Jiang P.X."/>
            <person name="Jones T."/>
            <person name="Kawai J."/>
            <person name="Kamiya A."/>
            <person name="Meyers C."/>
            <person name="Nakajima M."/>
            <person name="Narusaka M."/>
            <person name="Seki M."/>
            <person name="Sakurai T."/>
            <person name="Satou M."/>
            <person name="Tamse R."/>
            <person name="Vaysberg M."/>
            <person name="Wallender E.K."/>
            <person name="Wong C."/>
            <person name="Yamamura Y."/>
            <person name="Yuan S."/>
            <person name="Shinozaki K."/>
            <person name="Davis R.W."/>
            <person name="Theologis A."/>
            <person name="Ecker J.R."/>
        </authorList>
    </citation>
    <scope>NUCLEOTIDE SEQUENCE [LARGE SCALE MRNA]</scope>
    <source>
        <strain>cv. Columbia</strain>
    </source>
</reference>
<reference key="4">
    <citation type="journal article" date="2010" name="Plant Mol. Biol.">
        <title>RT The putative Arabidopsis zinc transporter ZTP29 is involved in the response to salt stress.</title>
        <authorList>
            <person name="Wang M."/>
            <person name="Xu Q."/>
            <person name="Yu J."/>
            <person name="Yuan M."/>
        </authorList>
    </citation>
    <scope>FUNCTION</scope>
    <scope>SUBCELLULAR LOCATION</scope>
    <scope>TISSUE SPECIFICITY</scope>
    <scope>INDUCTION</scope>
    <scope>DISRUPTION PHENOTYPE</scope>
</reference>
<organism>
    <name type="scientific">Arabidopsis thaliana</name>
    <name type="common">Mouse-ear cress</name>
    <dbReference type="NCBI Taxonomy" id="3702"/>
    <lineage>
        <taxon>Eukaryota</taxon>
        <taxon>Viridiplantae</taxon>
        <taxon>Streptophyta</taxon>
        <taxon>Embryophyta</taxon>
        <taxon>Tracheophyta</taxon>
        <taxon>Spermatophyta</taxon>
        <taxon>Magnoliopsida</taxon>
        <taxon>eudicotyledons</taxon>
        <taxon>Gunneridae</taxon>
        <taxon>Pentapetalae</taxon>
        <taxon>rosids</taxon>
        <taxon>malvids</taxon>
        <taxon>Brassicales</taxon>
        <taxon>Brassicaceae</taxon>
        <taxon>Camelineae</taxon>
        <taxon>Arabidopsis</taxon>
    </lineage>
</organism>
<gene>
    <name type="primary">ZTP29</name>
    <name type="ordered locus">At3g20870</name>
    <name type="ORF">MOE17.18</name>
</gene>
<proteinExistence type="evidence at transcript level"/>
<dbReference type="EMBL" id="AB025629">
    <property type="protein sequence ID" value="BAB02495.1"/>
    <property type="status" value="ALT_SEQ"/>
    <property type="molecule type" value="Genomic_DNA"/>
</dbReference>
<dbReference type="EMBL" id="CP002686">
    <property type="protein sequence ID" value="AEE76434.1"/>
    <property type="molecule type" value="Genomic_DNA"/>
</dbReference>
<dbReference type="EMBL" id="CP002686">
    <property type="protein sequence ID" value="ANM64763.1"/>
    <property type="molecule type" value="Genomic_DNA"/>
</dbReference>
<dbReference type="EMBL" id="AY054189">
    <property type="protein sequence ID" value="AAL06850.1"/>
    <property type="molecule type" value="mRNA"/>
</dbReference>
<dbReference type="EMBL" id="BT006342">
    <property type="protein sequence ID" value="AAP21150.1"/>
    <property type="molecule type" value="mRNA"/>
</dbReference>
<dbReference type="RefSeq" id="NP_001326769.1">
    <property type="nucleotide sequence ID" value="NM_001338494.1"/>
</dbReference>
<dbReference type="RefSeq" id="NP_566669.1">
    <property type="nucleotide sequence ID" value="NM_112979.4"/>
</dbReference>
<dbReference type="SMR" id="Q940Q3"/>
<dbReference type="FunCoup" id="Q940Q3">
    <property type="interactions" value="1139"/>
</dbReference>
<dbReference type="STRING" id="3702.Q940Q3"/>
<dbReference type="PaxDb" id="3702-AT3G20870.1"/>
<dbReference type="EnsemblPlants" id="AT3G20870.1">
    <property type="protein sequence ID" value="AT3G20870.1"/>
    <property type="gene ID" value="AT3G20870"/>
</dbReference>
<dbReference type="EnsemblPlants" id="AT3G20870.3">
    <property type="protein sequence ID" value="AT3G20870.3"/>
    <property type="gene ID" value="AT3G20870"/>
</dbReference>
<dbReference type="GeneID" id="821636"/>
<dbReference type="Gramene" id="AT3G20870.1">
    <property type="protein sequence ID" value="AT3G20870.1"/>
    <property type="gene ID" value="AT3G20870"/>
</dbReference>
<dbReference type="Gramene" id="AT3G20870.3">
    <property type="protein sequence ID" value="AT3G20870.3"/>
    <property type="gene ID" value="AT3G20870"/>
</dbReference>
<dbReference type="KEGG" id="ath:AT3G20870"/>
<dbReference type="Araport" id="AT3G20870"/>
<dbReference type="TAIR" id="AT3G20870">
    <property type="gene designation" value="ZTP29"/>
</dbReference>
<dbReference type="eggNOG" id="KOG2474">
    <property type="taxonomic scope" value="Eukaryota"/>
</dbReference>
<dbReference type="HOGENOM" id="CLU_015114_3_1_1"/>
<dbReference type="InParanoid" id="Q940Q3"/>
<dbReference type="OMA" id="HESTGPC"/>
<dbReference type="PhylomeDB" id="Q940Q3"/>
<dbReference type="PRO" id="PR:Q940Q3"/>
<dbReference type="Proteomes" id="UP000006548">
    <property type="component" value="Chromosome 3"/>
</dbReference>
<dbReference type="ExpressionAtlas" id="Q940Q3">
    <property type="expression patterns" value="baseline and differential"/>
</dbReference>
<dbReference type="GO" id="GO:0005789">
    <property type="term" value="C:endoplasmic reticulum membrane"/>
    <property type="evidence" value="ECO:0007669"/>
    <property type="project" value="UniProtKB-SubCell"/>
</dbReference>
<dbReference type="GO" id="GO:0046873">
    <property type="term" value="F:metal ion transmembrane transporter activity"/>
    <property type="evidence" value="ECO:0007669"/>
    <property type="project" value="InterPro"/>
</dbReference>
<dbReference type="GO" id="GO:0006829">
    <property type="term" value="P:zinc ion transport"/>
    <property type="evidence" value="ECO:0007669"/>
    <property type="project" value="UniProtKB-KW"/>
</dbReference>
<dbReference type="InterPro" id="IPR003689">
    <property type="entry name" value="ZIP"/>
</dbReference>
<dbReference type="PANTHER" id="PTHR11040:SF210">
    <property type="entry name" value="ZINC-REGULATED TRANSPORTER 3"/>
    <property type="match status" value="1"/>
</dbReference>
<dbReference type="PANTHER" id="PTHR11040">
    <property type="entry name" value="ZINC/IRON TRANSPORTER"/>
    <property type="match status" value="1"/>
</dbReference>
<dbReference type="Pfam" id="PF02535">
    <property type="entry name" value="Zip"/>
    <property type="match status" value="1"/>
</dbReference>